<comment type="function">
    <text evidence="2 4">Catalyzes the covalent attachment of ubiquitin to other proteins (Potential). Required for the maintenance of neuromuscular function (PubMed:12763049).</text>
</comment>
<comment type="catalytic activity">
    <reaction evidence="2">
        <text>S-ubiquitinyl-[E1 ubiquitin-activating enzyme]-L-cysteine + [E2 ubiquitin-conjugating enzyme]-L-cysteine = [E1 ubiquitin-activating enzyme]-L-cysteine + S-ubiquitinyl-[E2 ubiquitin-conjugating enzyme]-L-cysteine.</text>
        <dbReference type="EC" id="2.3.2.23"/>
    </reaction>
</comment>
<comment type="pathway">
    <text evidence="2">Protein modification; protein ubiquitination.</text>
</comment>
<comment type="subcellular location">
    <subcellularLocation>
        <location evidence="4">Cytoplasm</location>
    </subcellularLocation>
    <subcellularLocation>
        <location evidence="4">Nucleus</location>
    </subcellularLocation>
</comment>
<comment type="tissue specificity">
    <text evidence="4">In the embryo, expressed in precursor neuron and muscle cells and in other cells such as hypodermal cells. After hatching of L1 larvae and in all subsequent stages, strongest expression in pharyngeal muscle and anal muscle cells. In L4 larvae and adolescent hermaphrodites, also expressed in the vulval muscles. Expression also detected in all four nerve cords and in neurons with weaker levels in all body wall muscles.</text>
</comment>
<comment type="developmental stage">
    <text evidence="4">Expression begins during gastrulation and continues during all subsequent stages.</text>
</comment>
<comment type="disruption phenotype">
    <text evidence="4">In males and hermaphrodites, late-onset paralysis of muscular functions required for locomotion and defecation. In addition, hermaphrodites show a progressive egg-laying defect, resulting in intrauterine hatching and premature death. Vulva protrusion is often observed with occasional rupture resulting in the projection of internal organs.</text>
</comment>
<comment type="similarity">
    <text evidence="2">Belongs to the ubiquitin-conjugating enzyme family.</text>
</comment>
<organism evidence="7">
    <name type="scientific">Caenorhabditis elegans</name>
    <dbReference type="NCBI Taxonomy" id="6239"/>
    <lineage>
        <taxon>Eukaryota</taxon>
        <taxon>Metazoa</taxon>
        <taxon>Ecdysozoa</taxon>
        <taxon>Nematoda</taxon>
        <taxon>Chromadorea</taxon>
        <taxon>Rhabditida</taxon>
        <taxon>Rhabditina</taxon>
        <taxon>Rhabditomorpha</taxon>
        <taxon>Rhabditoidea</taxon>
        <taxon>Rhabditidae</taxon>
        <taxon>Peloderinae</taxon>
        <taxon>Caenorhabditis</taxon>
    </lineage>
</organism>
<keyword id="KW-0067">ATP-binding</keyword>
<keyword id="KW-0963">Cytoplasm</keyword>
<keyword id="KW-0547">Nucleotide-binding</keyword>
<keyword id="KW-0539">Nucleus</keyword>
<keyword id="KW-1185">Reference proteome</keyword>
<keyword id="KW-0808">Transferase</keyword>
<keyword id="KW-0833">Ubl conjugation pathway</keyword>
<sequence length="387" mass="44061">MACLRKLKEDIQVLEKLFPKNHNRFQILSASVDELSMKFINAENKGIIVTANIQENYPRQPPIWFSESDDVPVIGMSLQRLTETEESTNILHQVHRLVSDLCSFYNLQMPCELPQIAPPVRDDIDEGRGSDISDTTSEPIDDDMAGDGEVDDDDEEEEDDEDADGDIEIVEMAEEDPTSQHDVGVSKEGLDMLDKVSKINRQQHLDGKVQGSITATDRLMKEIRDIHRSEHFKNGIYTFELEKEENLYQWWIKLHKVDEDSPLFEDMKKLKKDHNQDHLLFSFTFNEKFPCDPPFVRVVAPHINQGFVLGGGAICMELLTKQGWSSAYSIESCILQIAATLVKGRARISFDAKHTSTYSMARAQQSFKSLQQIHAKSGWYTPPKTEG</sequence>
<dbReference type="EC" id="2.3.2.23" evidence="1"/>
<dbReference type="EMBL" id="AF537093">
    <property type="protein sequence ID" value="AAO85552.1"/>
    <property type="molecule type" value="mRNA"/>
</dbReference>
<dbReference type="EMBL" id="Z79754">
    <property type="protein sequence ID" value="CAB02096.2"/>
    <property type="molecule type" value="Genomic_DNA"/>
</dbReference>
<dbReference type="PIR" id="T21349">
    <property type="entry name" value="T21349"/>
</dbReference>
<dbReference type="RefSeq" id="NP_492764.2">
    <property type="nucleotide sequence ID" value="NM_060363.7"/>
</dbReference>
<dbReference type="SMR" id="Q93571"/>
<dbReference type="FunCoup" id="Q93571">
    <property type="interactions" value="3358"/>
</dbReference>
<dbReference type="STRING" id="6239.F25H2.8.2"/>
<dbReference type="PaxDb" id="6239-F25H2.8"/>
<dbReference type="PeptideAtlas" id="Q93571"/>
<dbReference type="EnsemblMetazoa" id="F25H2.8.1">
    <property type="protein sequence ID" value="F25H2.8.1"/>
    <property type="gene ID" value="WBGene00006720"/>
</dbReference>
<dbReference type="GeneID" id="172941"/>
<dbReference type="KEGG" id="cel:CELE_F25H2.8"/>
<dbReference type="UCSC" id="F25H2.8.1">
    <property type="organism name" value="c. elegans"/>
</dbReference>
<dbReference type="AGR" id="WB:WBGene00006720"/>
<dbReference type="CTD" id="172941"/>
<dbReference type="WormBase" id="F25H2.8">
    <property type="protein sequence ID" value="CE34543"/>
    <property type="gene ID" value="WBGene00006720"/>
    <property type="gene designation" value="ubc-25"/>
</dbReference>
<dbReference type="eggNOG" id="KOG0897">
    <property type="taxonomic scope" value="Eukaryota"/>
</dbReference>
<dbReference type="GeneTree" id="ENSGT00940000170329"/>
<dbReference type="HOGENOM" id="CLU_053863_0_0_1"/>
<dbReference type="InParanoid" id="Q93571"/>
<dbReference type="OMA" id="VFPKNHE"/>
<dbReference type="OrthoDB" id="109543at2759"/>
<dbReference type="PhylomeDB" id="Q93571"/>
<dbReference type="Reactome" id="R-CEL-8866652">
    <property type="pathway name" value="Synthesis of active ubiquitin: roles of E1 and E2 enzymes"/>
</dbReference>
<dbReference type="Reactome" id="R-CEL-983168">
    <property type="pathway name" value="Antigen processing: Ubiquitination &amp; Proteasome degradation"/>
</dbReference>
<dbReference type="UniPathway" id="UPA00143"/>
<dbReference type="PRO" id="PR:Q93571"/>
<dbReference type="Proteomes" id="UP000001940">
    <property type="component" value="Chromosome I"/>
</dbReference>
<dbReference type="Bgee" id="WBGene00006720">
    <property type="expression patterns" value="Expressed in embryo and 4 other cell types or tissues"/>
</dbReference>
<dbReference type="GO" id="GO:0005829">
    <property type="term" value="C:cytosol"/>
    <property type="evidence" value="ECO:0000314"/>
    <property type="project" value="UniProtKB"/>
</dbReference>
<dbReference type="GO" id="GO:0043025">
    <property type="term" value="C:neuronal cell body"/>
    <property type="evidence" value="ECO:0000314"/>
    <property type="project" value="UniProtKB"/>
</dbReference>
<dbReference type="GO" id="GO:0005634">
    <property type="term" value="C:nucleus"/>
    <property type="evidence" value="ECO:0000314"/>
    <property type="project" value="UniProtKB"/>
</dbReference>
<dbReference type="GO" id="GO:0005524">
    <property type="term" value="F:ATP binding"/>
    <property type="evidence" value="ECO:0007669"/>
    <property type="project" value="UniProtKB-KW"/>
</dbReference>
<dbReference type="GO" id="GO:0061631">
    <property type="term" value="F:ubiquitin conjugating enzyme activity"/>
    <property type="evidence" value="ECO:0000318"/>
    <property type="project" value="GO_Central"/>
</dbReference>
<dbReference type="GO" id="GO:0040011">
    <property type="term" value="P:locomotion"/>
    <property type="evidence" value="ECO:0000315"/>
    <property type="project" value="UniProtKB"/>
</dbReference>
<dbReference type="GO" id="GO:0000209">
    <property type="term" value="P:protein polyubiquitination"/>
    <property type="evidence" value="ECO:0000318"/>
    <property type="project" value="GO_Central"/>
</dbReference>
<dbReference type="CDD" id="cd23802">
    <property type="entry name" value="UBCc_UBE2Q"/>
    <property type="match status" value="1"/>
</dbReference>
<dbReference type="FunFam" id="3.10.110.10:FF:000131">
    <property type="entry name" value="Ubiquitin-conjugating enzyme E2 25"/>
    <property type="match status" value="1"/>
</dbReference>
<dbReference type="Gene3D" id="3.10.110.10">
    <property type="entry name" value="Ubiquitin Conjugating Enzyme"/>
    <property type="match status" value="1"/>
</dbReference>
<dbReference type="InterPro" id="IPR000608">
    <property type="entry name" value="UBQ-conjugat_E2_core"/>
</dbReference>
<dbReference type="InterPro" id="IPR016135">
    <property type="entry name" value="UBQ-conjugating_enzyme/RWD"/>
</dbReference>
<dbReference type="Pfam" id="PF00179">
    <property type="entry name" value="UQ_con"/>
    <property type="match status" value="1"/>
</dbReference>
<dbReference type="SMART" id="SM00212">
    <property type="entry name" value="UBCc"/>
    <property type="match status" value="1"/>
</dbReference>
<dbReference type="SUPFAM" id="SSF54495">
    <property type="entry name" value="UBC-like"/>
    <property type="match status" value="1"/>
</dbReference>
<dbReference type="PROSITE" id="PS50127">
    <property type="entry name" value="UBC_2"/>
    <property type="match status" value="1"/>
</dbReference>
<reference key="1">
    <citation type="journal article" date="2003" name="Biochem. Biophys. Res. Commun.">
        <title>The maintenance of neuromuscular function requires UBC-25 in Caenorhabditis elegans.</title>
        <authorList>
            <person name="Schulze E."/>
            <person name="Altmann M.E."/>
            <person name="Adham I.M."/>
            <person name="Schulze B."/>
            <person name="Frode S."/>
            <person name="Engel W."/>
        </authorList>
    </citation>
    <scope>NUCLEOTIDE SEQUENCE [MRNA]</scope>
    <scope>FUNCTION</scope>
    <scope>SUBCELLULAR LOCATION</scope>
    <scope>TISSUE SPECIFICITY</scope>
    <scope>DEVELOPMENTAL STAGE</scope>
    <scope>DISRUPTION PHENOTYPE</scope>
</reference>
<reference key="2">
    <citation type="journal article" date="1998" name="Science">
        <title>Genome sequence of the nematode C. elegans: a platform for investigating biology.</title>
        <authorList>
            <consortium name="The C. elegans sequencing consortium"/>
        </authorList>
    </citation>
    <scope>NUCLEOTIDE SEQUENCE [LARGE SCALE GENOMIC DNA]</scope>
    <source>
        <strain evidence="8">Bristol N2</strain>
    </source>
</reference>
<accession>Q93571</accession>
<accession>Q86M58</accession>
<evidence type="ECO:0000255" key="1"/>
<evidence type="ECO:0000255" key="2">
    <source>
        <dbReference type="PROSITE-ProRule" id="PRU00388"/>
    </source>
</evidence>
<evidence type="ECO:0000256" key="3">
    <source>
        <dbReference type="SAM" id="MobiDB-lite"/>
    </source>
</evidence>
<evidence type="ECO:0000269" key="4">
    <source>
    </source>
</evidence>
<evidence type="ECO:0000303" key="5">
    <source>
    </source>
</evidence>
<evidence type="ECO:0000305" key="6"/>
<evidence type="ECO:0000312" key="7">
    <source>
        <dbReference type="EMBL" id="CAB02096.2"/>
    </source>
</evidence>
<evidence type="ECO:0000312" key="8">
    <source>
        <dbReference type="Proteomes" id="UP000001940"/>
    </source>
</evidence>
<evidence type="ECO:0000312" key="9">
    <source>
        <dbReference type="WormBase" id="F25H2.8"/>
    </source>
</evidence>
<feature type="chain" id="PRO_0000431420" description="Ubiquitin-conjugating enzyme E2 25" evidence="6">
    <location>
        <begin position="1"/>
        <end position="387"/>
    </location>
</feature>
<feature type="domain" description="UBC core" evidence="2">
    <location>
        <begin position="214"/>
        <end position="380"/>
    </location>
</feature>
<feature type="region of interest" description="Disordered" evidence="3">
    <location>
        <begin position="117"/>
        <end position="164"/>
    </location>
</feature>
<feature type="compositionally biased region" description="Basic and acidic residues" evidence="3">
    <location>
        <begin position="120"/>
        <end position="131"/>
    </location>
</feature>
<feature type="compositionally biased region" description="Acidic residues" evidence="3">
    <location>
        <begin position="139"/>
        <end position="164"/>
    </location>
</feature>
<feature type="active site" description="Glycyl thioester intermediate" evidence="2">
    <location>
        <position position="315"/>
    </location>
</feature>
<feature type="sequence conflict" description="In Ref. 1; AAO85552." evidence="6" ref="1">
    <original>V</original>
    <variation>A</variation>
    <location>
        <position position="196"/>
    </location>
</feature>
<feature type="sequence conflict" description="In Ref. 1; AAO85552." evidence="6" ref="1">
    <original>T</original>
    <variation>S</variation>
    <location>
        <position position="216"/>
    </location>
</feature>
<name>UBC25_CAEEL</name>
<proteinExistence type="evidence at transcript level"/>
<gene>
    <name evidence="9" type="primary">ubc-25</name>
    <name evidence="9" type="ORF">F25H2.8</name>
</gene>
<protein>
    <recommendedName>
        <fullName evidence="5">Ubiquitin-conjugating enzyme E2 25</fullName>
        <ecNumber evidence="1">2.3.2.23</ecNumber>
    </recommendedName>
    <alternativeName>
        <fullName>E2 ubiquitin-conjugating enzyme 25</fullName>
    </alternativeName>
</protein>